<comment type="function">
    <text evidence="1">Could be a nuclease involved in processing of the 5'-end of pre-16S rRNA.</text>
</comment>
<comment type="subcellular location">
    <subcellularLocation>
        <location evidence="1">Cytoplasm</location>
    </subcellularLocation>
</comment>
<comment type="similarity">
    <text evidence="1">Belongs to the YqgF nuclease family.</text>
</comment>
<evidence type="ECO:0000255" key="1">
    <source>
        <dbReference type="HAMAP-Rule" id="MF_00651"/>
    </source>
</evidence>
<sequence length="137" mass="15232">MRILGLDIGNKTIGVALSDPLGITAQGITTIKRKGEDRDIEELKAICDKYKVEVIVCGLPKNMNGTLGPQSEKVLKFCNIIEEVINLPIKMWDERLTTVAANKAMLEADLSRAKRKKIVDKMAATYILQGYLDRISK</sequence>
<proteinExistence type="inferred from homology"/>
<dbReference type="EC" id="3.1.-.-" evidence="1"/>
<dbReference type="EMBL" id="AP009049">
    <property type="protein sequence ID" value="BAH06273.1"/>
    <property type="molecule type" value="Genomic_DNA"/>
</dbReference>
<dbReference type="RefSeq" id="WP_012101713.1">
    <property type="nucleotide sequence ID" value="NC_011837.1"/>
</dbReference>
<dbReference type="SMR" id="B9E198"/>
<dbReference type="KEGG" id="ckr:CKR_1222"/>
<dbReference type="HOGENOM" id="CLU_098240_2_0_9"/>
<dbReference type="Proteomes" id="UP000007969">
    <property type="component" value="Chromosome"/>
</dbReference>
<dbReference type="GO" id="GO:0005829">
    <property type="term" value="C:cytosol"/>
    <property type="evidence" value="ECO:0007669"/>
    <property type="project" value="TreeGrafter"/>
</dbReference>
<dbReference type="GO" id="GO:0004518">
    <property type="term" value="F:nuclease activity"/>
    <property type="evidence" value="ECO:0007669"/>
    <property type="project" value="UniProtKB-KW"/>
</dbReference>
<dbReference type="GO" id="GO:0000967">
    <property type="term" value="P:rRNA 5'-end processing"/>
    <property type="evidence" value="ECO:0007669"/>
    <property type="project" value="UniProtKB-UniRule"/>
</dbReference>
<dbReference type="CDD" id="cd16964">
    <property type="entry name" value="YqgF"/>
    <property type="match status" value="1"/>
</dbReference>
<dbReference type="Gene3D" id="3.30.420.140">
    <property type="entry name" value="YqgF/RNase H-like domain"/>
    <property type="match status" value="1"/>
</dbReference>
<dbReference type="HAMAP" id="MF_00651">
    <property type="entry name" value="Nuclease_YqgF"/>
    <property type="match status" value="1"/>
</dbReference>
<dbReference type="InterPro" id="IPR012337">
    <property type="entry name" value="RNaseH-like_sf"/>
</dbReference>
<dbReference type="InterPro" id="IPR005227">
    <property type="entry name" value="YqgF"/>
</dbReference>
<dbReference type="InterPro" id="IPR006641">
    <property type="entry name" value="YqgF/RNaseH-like_dom"/>
</dbReference>
<dbReference type="InterPro" id="IPR037027">
    <property type="entry name" value="YqgF/RNaseH-like_dom_sf"/>
</dbReference>
<dbReference type="NCBIfam" id="TIGR00250">
    <property type="entry name" value="RNAse_H_YqgF"/>
    <property type="match status" value="1"/>
</dbReference>
<dbReference type="PANTHER" id="PTHR33317">
    <property type="entry name" value="POLYNUCLEOTIDYL TRANSFERASE, RIBONUCLEASE H-LIKE SUPERFAMILY PROTEIN"/>
    <property type="match status" value="1"/>
</dbReference>
<dbReference type="PANTHER" id="PTHR33317:SF4">
    <property type="entry name" value="POLYNUCLEOTIDYL TRANSFERASE, RIBONUCLEASE H-LIKE SUPERFAMILY PROTEIN"/>
    <property type="match status" value="1"/>
</dbReference>
<dbReference type="Pfam" id="PF03652">
    <property type="entry name" value="RuvX"/>
    <property type="match status" value="1"/>
</dbReference>
<dbReference type="SMART" id="SM00732">
    <property type="entry name" value="YqgFc"/>
    <property type="match status" value="1"/>
</dbReference>
<dbReference type="SUPFAM" id="SSF53098">
    <property type="entry name" value="Ribonuclease H-like"/>
    <property type="match status" value="1"/>
</dbReference>
<name>YQGF_CLOK1</name>
<keyword id="KW-0963">Cytoplasm</keyword>
<keyword id="KW-0378">Hydrolase</keyword>
<keyword id="KW-0540">Nuclease</keyword>
<keyword id="KW-0690">Ribosome biogenesis</keyword>
<reference key="1">
    <citation type="submission" date="2005-09" db="EMBL/GenBank/DDBJ databases">
        <title>Complete genome sequence of Clostridium kluyveri and comparative genomics of Clostridia species.</title>
        <authorList>
            <person name="Inui M."/>
            <person name="Nonaka H."/>
            <person name="Shinoda Y."/>
            <person name="Ikenaga Y."/>
            <person name="Abe M."/>
            <person name="Naito K."/>
            <person name="Vertes A.A."/>
            <person name="Yukawa H."/>
        </authorList>
    </citation>
    <scope>NUCLEOTIDE SEQUENCE [LARGE SCALE GENOMIC DNA]</scope>
    <source>
        <strain>NBRC 12016</strain>
    </source>
</reference>
<organism>
    <name type="scientific">Clostridium kluyveri (strain NBRC 12016)</name>
    <dbReference type="NCBI Taxonomy" id="583346"/>
    <lineage>
        <taxon>Bacteria</taxon>
        <taxon>Bacillati</taxon>
        <taxon>Bacillota</taxon>
        <taxon>Clostridia</taxon>
        <taxon>Eubacteriales</taxon>
        <taxon>Clostridiaceae</taxon>
        <taxon>Clostridium</taxon>
    </lineage>
</organism>
<feature type="chain" id="PRO_1000147474" description="Putative pre-16S rRNA nuclease">
    <location>
        <begin position="1"/>
        <end position="137"/>
    </location>
</feature>
<gene>
    <name type="ordered locus">CKR_1222</name>
</gene>
<protein>
    <recommendedName>
        <fullName evidence="1">Putative pre-16S rRNA nuclease</fullName>
        <ecNumber evidence="1">3.1.-.-</ecNumber>
    </recommendedName>
</protein>
<accession>B9E198</accession>